<dbReference type="EC" id="2.7.7.3" evidence="1"/>
<dbReference type="EMBL" id="CP000348">
    <property type="protein sequence ID" value="ABJ77796.1"/>
    <property type="molecule type" value="Genomic_DNA"/>
</dbReference>
<dbReference type="RefSeq" id="WP_002724756.1">
    <property type="nucleotide sequence ID" value="NC_008508.1"/>
</dbReference>
<dbReference type="SMR" id="Q056E9"/>
<dbReference type="GeneID" id="61175329"/>
<dbReference type="KEGG" id="lbl:LBL_0179"/>
<dbReference type="HOGENOM" id="CLU_100149_0_1_12"/>
<dbReference type="UniPathway" id="UPA00241">
    <property type="reaction ID" value="UER00355"/>
</dbReference>
<dbReference type="GO" id="GO:0005737">
    <property type="term" value="C:cytoplasm"/>
    <property type="evidence" value="ECO:0007669"/>
    <property type="project" value="UniProtKB-SubCell"/>
</dbReference>
<dbReference type="GO" id="GO:0005524">
    <property type="term" value="F:ATP binding"/>
    <property type="evidence" value="ECO:0007669"/>
    <property type="project" value="UniProtKB-KW"/>
</dbReference>
<dbReference type="GO" id="GO:0004595">
    <property type="term" value="F:pantetheine-phosphate adenylyltransferase activity"/>
    <property type="evidence" value="ECO:0007669"/>
    <property type="project" value="UniProtKB-UniRule"/>
</dbReference>
<dbReference type="GO" id="GO:0015937">
    <property type="term" value="P:coenzyme A biosynthetic process"/>
    <property type="evidence" value="ECO:0007669"/>
    <property type="project" value="UniProtKB-UniRule"/>
</dbReference>
<dbReference type="CDD" id="cd02163">
    <property type="entry name" value="PPAT"/>
    <property type="match status" value="1"/>
</dbReference>
<dbReference type="Gene3D" id="3.40.50.620">
    <property type="entry name" value="HUPs"/>
    <property type="match status" value="1"/>
</dbReference>
<dbReference type="HAMAP" id="MF_00151">
    <property type="entry name" value="PPAT_bact"/>
    <property type="match status" value="1"/>
</dbReference>
<dbReference type="InterPro" id="IPR004821">
    <property type="entry name" value="Cyt_trans-like"/>
</dbReference>
<dbReference type="InterPro" id="IPR001980">
    <property type="entry name" value="PPAT"/>
</dbReference>
<dbReference type="InterPro" id="IPR014729">
    <property type="entry name" value="Rossmann-like_a/b/a_fold"/>
</dbReference>
<dbReference type="NCBIfam" id="TIGR01510">
    <property type="entry name" value="coaD_prev_kdtB"/>
    <property type="match status" value="1"/>
</dbReference>
<dbReference type="NCBIfam" id="TIGR00125">
    <property type="entry name" value="cyt_tran_rel"/>
    <property type="match status" value="1"/>
</dbReference>
<dbReference type="PANTHER" id="PTHR21342">
    <property type="entry name" value="PHOSPHOPANTETHEINE ADENYLYLTRANSFERASE"/>
    <property type="match status" value="1"/>
</dbReference>
<dbReference type="PANTHER" id="PTHR21342:SF1">
    <property type="entry name" value="PHOSPHOPANTETHEINE ADENYLYLTRANSFERASE"/>
    <property type="match status" value="1"/>
</dbReference>
<dbReference type="Pfam" id="PF01467">
    <property type="entry name" value="CTP_transf_like"/>
    <property type="match status" value="1"/>
</dbReference>
<dbReference type="PRINTS" id="PR01020">
    <property type="entry name" value="LPSBIOSNTHSS"/>
</dbReference>
<dbReference type="SUPFAM" id="SSF52374">
    <property type="entry name" value="Nucleotidylyl transferase"/>
    <property type="match status" value="1"/>
</dbReference>
<keyword id="KW-0067">ATP-binding</keyword>
<keyword id="KW-0173">Coenzyme A biosynthesis</keyword>
<keyword id="KW-0963">Cytoplasm</keyword>
<keyword id="KW-0460">Magnesium</keyword>
<keyword id="KW-0547">Nucleotide-binding</keyword>
<keyword id="KW-0548">Nucleotidyltransferase</keyword>
<keyword id="KW-0808">Transferase</keyword>
<sequence length="160" mass="17762">MKHLAIYPGSFDPLTNGHLDILQRSLGLFDKVIIAIAVNSNKSTLFSIEERLEFIHKVTQGLKGLEIDTFQGLTVDYCNKVGANSIIRGLRAVTDFDYEYAISLMNKKLAPNVETVFLMSSGEYSFISSTIVKEVARHGRDVSNQVPEIVGKALLKKLSQ</sequence>
<organism>
    <name type="scientific">Leptospira borgpetersenii serovar Hardjo-bovis (strain L550)</name>
    <dbReference type="NCBI Taxonomy" id="355276"/>
    <lineage>
        <taxon>Bacteria</taxon>
        <taxon>Pseudomonadati</taxon>
        <taxon>Spirochaetota</taxon>
        <taxon>Spirochaetia</taxon>
        <taxon>Leptospirales</taxon>
        <taxon>Leptospiraceae</taxon>
        <taxon>Leptospira</taxon>
    </lineage>
</organism>
<gene>
    <name evidence="1" type="primary">coaD</name>
    <name type="ordered locus">LBL_0179</name>
</gene>
<name>COAD_LEPBL</name>
<accession>Q056E9</accession>
<protein>
    <recommendedName>
        <fullName evidence="1">Phosphopantetheine adenylyltransferase</fullName>
        <ecNumber evidence="1">2.7.7.3</ecNumber>
    </recommendedName>
    <alternativeName>
        <fullName evidence="1">Dephospho-CoA pyrophosphorylase</fullName>
    </alternativeName>
    <alternativeName>
        <fullName evidence="1">Pantetheine-phosphate adenylyltransferase</fullName>
        <shortName evidence="1">PPAT</shortName>
    </alternativeName>
</protein>
<feature type="chain" id="PRO_1000011170" description="Phosphopantetheine adenylyltransferase">
    <location>
        <begin position="1"/>
        <end position="160"/>
    </location>
</feature>
<feature type="binding site" evidence="1">
    <location>
        <begin position="10"/>
        <end position="11"/>
    </location>
    <ligand>
        <name>ATP</name>
        <dbReference type="ChEBI" id="CHEBI:30616"/>
    </ligand>
</feature>
<feature type="binding site" evidence="1">
    <location>
        <position position="10"/>
    </location>
    <ligand>
        <name>substrate</name>
    </ligand>
</feature>
<feature type="binding site" evidence="1">
    <location>
        <position position="18"/>
    </location>
    <ligand>
        <name>ATP</name>
        <dbReference type="ChEBI" id="CHEBI:30616"/>
    </ligand>
</feature>
<feature type="binding site" evidence="1">
    <location>
        <position position="42"/>
    </location>
    <ligand>
        <name>substrate</name>
    </ligand>
</feature>
<feature type="binding site" evidence="1">
    <location>
        <position position="74"/>
    </location>
    <ligand>
        <name>substrate</name>
    </ligand>
</feature>
<feature type="binding site" evidence="1">
    <location>
        <position position="88"/>
    </location>
    <ligand>
        <name>substrate</name>
    </ligand>
</feature>
<feature type="binding site" evidence="1">
    <location>
        <begin position="89"/>
        <end position="91"/>
    </location>
    <ligand>
        <name>ATP</name>
        <dbReference type="ChEBI" id="CHEBI:30616"/>
    </ligand>
</feature>
<feature type="binding site" evidence="1">
    <location>
        <position position="99"/>
    </location>
    <ligand>
        <name>ATP</name>
        <dbReference type="ChEBI" id="CHEBI:30616"/>
    </ligand>
</feature>
<feature type="binding site" evidence="1">
    <location>
        <begin position="124"/>
        <end position="130"/>
    </location>
    <ligand>
        <name>ATP</name>
        <dbReference type="ChEBI" id="CHEBI:30616"/>
    </ligand>
</feature>
<feature type="site" description="Transition state stabilizer" evidence="1">
    <location>
        <position position="18"/>
    </location>
</feature>
<reference key="1">
    <citation type="journal article" date="2006" name="Proc. Natl. Acad. Sci. U.S.A.">
        <title>Genome reduction in Leptospira borgpetersenii reflects limited transmission potential.</title>
        <authorList>
            <person name="Bulach D.M."/>
            <person name="Zuerner R.L."/>
            <person name="Wilson P."/>
            <person name="Seemann T."/>
            <person name="McGrath A."/>
            <person name="Cullen P.A."/>
            <person name="Davis J."/>
            <person name="Johnson M."/>
            <person name="Kuczek E."/>
            <person name="Alt D.P."/>
            <person name="Peterson-Burch B."/>
            <person name="Coppel R.L."/>
            <person name="Rood J.I."/>
            <person name="Davies J.K."/>
            <person name="Adler B."/>
        </authorList>
    </citation>
    <scope>NUCLEOTIDE SEQUENCE [LARGE SCALE GENOMIC DNA]</scope>
    <source>
        <strain>L550</strain>
    </source>
</reference>
<evidence type="ECO:0000255" key="1">
    <source>
        <dbReference type="HAMAP-Rule" id="MF_00151"/>
    </source>
</evidence>
<comment type="function">
    <text evidence="1">Reversibly transfers an adenylyl group from ATP to 4'-phosphopantetheine, yielding dephospho-CoA (dPCoA) and pyrophosphate.</text>
</comment>
<comment type="catalytic activity">
    <reaction evidence="1">
        <text>(R)-4'-phosphopantetheine + ATP + H(+) = 3'-dephospho-CoA + diphosphate</text>
        <dbReference type="Rhea" id="RHEA:19801"/>
        <dbReference type="ChEBI" id="CHEBI:15378"/>
        <dbReference type="ChEBI" id="CHEBI:30616"/>
        <dbReference type="ChEBI" id="CHEBI:33019"/>
        <dbReference type="ChEBI" id="CHEBI:57328"/>
        <dbReference type="ChEBI" id="CHEBI:61723"/>
        <dbReference type="EC" id="2.7.7.3"/>
    </reaction>
</comment>
<comment type="cofactor">
    <cofactor evidence="1">
        <name>Mg(2+)</name>
        <dbReference type="ChEBI" id="CHEBI:18420"/>
    </cofactor>
</comment>
<comment type="pathway">
    <text evidence="1">Cofactor biosynthesis; coenzyme A biosynthesis; CoA from (R)-pantothenate: step 4/5.</text>
</comment>
<comment type="subunit">
    <text evidence="1">Homohexamer.</text>
</comment>
<comment type="subcellular location">
    <subcellularLocation>
        <location evidence="1">Cytoplasm</location>
    </subcellularLocation>
</comment>
<comment type="similarity">
    <text evidence="1">Belongs to the bacterial CoaD family.</text>
</comment>
<proteinExistence type="inferred from homology"/>